<proteinExistence type="inferred from homology"/>
<comment type="function">
    <molecule>Envelope glycoprotein gp160</molecule>
    <text evidence="1">Oligomerizes in the host endoplasmic reticulum into predominantly trimers. In a second time, gp160 transits in the host Golgi, where glycosylation is completed. The precursor is then proteolytically cleaved in the trans-Golgi and thereby activated by cellular furin or furin-like proteases to produce gp120 and gp41.</text>
</comment>
<comment type="function">
    <molecule>Surface protein gp120</molecule>
    <text evidence="1">Attaches the virus to the host lymphoid cell by binding to the primary receptor CD4. This interaction induces a structural rearrangement creating a high affinity binding site for a chemokine coreceptor like CXCR4 and/or CCR5. Acts as a ligand for CD209/DC-SIGN and CLEC4M/DC-SIGNR, which are respectively found on dendritic cells (DCs), and on endothelial cells of liver sinusoids and lymph node sinuses. These interactions allow capture of viral particles at mucosal surfaces by these cells and subsequent transmission to permissive cells. HIV subverts the migration properties of dendritic cells to gain access to CD4+ T-cells in lymph nodes. Virus transmission to permissive T-cells occurs either in trans (without DCs infection, through viral capture and transmission), or in cis (following DCs productive infection, through the usual CD4-gp120 interaction), thereby inducing a robust infection. In trans infection, bound virions remain infectious over days and it is proposed that they are not degraded, but protected in non-lysosomal acidic organelles within the DCs close to the cell membrane thus contributing to the viral infectious potential during DCs' migration from the periphery to the lymphoid tissues. On arrival at lymphoid tissues, intact virions recycle back to DCs' cell surface allowing virus transmission to CD4+ T-cells.</text>
</comment>
<comment type="function">
    <molecule>Transmembrane protein gp41</molecule>
    <text evidence="1">Acts as a class I viral fusion protein. Under the current model, the protein has at least 3 conformational states: pre-fusion native state, pre-hairpin intermediate state, and post-fusion hairpin state. During fusion of viral and target intracellular membranes, the coiled coil regions (heptad repeats) assume a trimer-of-hairpins structure, positioning the fusion peptide in close proximity to the C-terminal region of the ectodomain. The formation of this structure appears to drive apposition and subsequent fusion of viral and target cell membranes. Complete fusion occurs in host cell endosomes and is dynamin-dependent, however some lipid transfer might occur at the plasma membrane. The virus undergoes clathrin-dependent internalization long before endosomal fusion, thus minimizing the surface exposure of conserved viral epitopes during fusion and reducing the efficacy of inhibitors targeting these epitopes. Membranes fusion leads to delivery of the nucleocapsid into the cytoplasm.</text>
</comment>
<comment type="subunit">
    <molecule>Surface protein gp120</molecule>
    <text evidence="1">The mature envelope protein (Env) consists of a homotrimer of non-covalently associated gp120-gp41 heterodimers. The resulting complex protrudes from the virus surface as a spike. There seems to be as few as 10 spikes on the average virion. Interacts with host CD4, CCR5 and CXCR4. Gp120 also interacts with the C-type lectins CD209/DC-SIGN and CLEC4M/DC-SIGNR (collectively referred to as DC-SIGN(R)). Gp120 and gp41 interact with GalCer. Gp120 interacts with host ITGA4/ITGB7 complex; on CD4+ T-cells, this interaction results in rapid activation of integrin ITGAL/LFA-1, which facilitates efficient cell-to-cell spreading of HIV-1. Gp120 interacts with cell-associated heparan sulfate; this interaction increases virus infectivity on permissive cells and may be involved in infection of CD4- cells.</text>
</comment>
<comment type="subunit">
    <molecule>Transmembrane protein gp41</molecule>
    <text evidence="1">The mature envelope protein (Env) consists of a homotrimer of non-covalently associated gp120-gp41 heterodimers. The resulting complex protrudes from the virus surface as a spike. There seems to be as few as 10 spikes on the average virion.</text>
</comment>
<comment type="subcellular location">
    <molecule>Surface protein gp120</molecule>
    <subcellularLocation>
        <location evidence="1">Virion membrane</location>
        <topology evidence="1">Peripheral membrane protein</topology>
    </subcellularLocation>
    <subcellularLocation>
        <location evidence="1">Host cell membrane</location>
        <topology evidence="1">Peripheral membrane protein</topology>
    </subcellularLocation>
    <subcellularLocation>
        <location evidence="1">Host endosome membrane</location>
        <topology evidence="1">Single-pass type I membrane protein</topology>
    </subcellularLocation>
    <text evidence="1">The surface protein is not anchored to the viral envelope, but associates with the extravirion surface through its binding to TM. It is probably concentrated at the site of budding and incorporated into the virions possibly by contacts between the cytoplasmic tail of Env and the N-terminus of Gag.</text>
</comment>
<comment type="subcellular location">
    <molecule>Transmembrane protein gp41</molecule>
    <subcellularLocation>
        <location evidence="1">Virion membrane</location>
        <topology evidence="1">Single-pass type I membrane protein</topology>
    </subcellularLocation>
    <subcellularLocation>
        <location evidence="1">Host cell membrane</location>
        <topology evidence="1">Single-pass type I membrane protein</topology>
    </subcellularLocation>
    <subcellularLocation>
        <location evidence="1">Host endosome membrane</location>
        <topology evidence="1">Single-pass type I membrane protein</topology>
    </subcellularLocation>
    <text evidence="1">It is probably concentrated at the site of budding and incorporated into the virions possibly by contacts between the cytoplasmic tail of Env and the N-terminus of Gag.</text>
</comment>
<comment type="domain">
    <text evidence="1">Some of the most genetically diverse regions of the viral genome are present in Env. They are called variable regions 1 through 5 (V1 through V5). Coreceptor usage of gp120 is determined mainly by the primary structure of the third variable region (V3) in the outer domain of gp120. The sequence of V3 determines which coreceptor, CCR5 and/or CXCR4 (corresponding to R5/macrophage, X4/T cell and R5X4/T cell and macrophage tropism), is used to trigger the fusion potential of the Env complex, and hence which cells the virus can infect. Binding to CCR5 involves a region adjacent in addition to V3.</text>
</comment>
<comment type="domain">
    <text evidence="1">The membrane proximal external region (MPER) present in gp41 is a tryptophan-rich region recognized by the antibodies 2F5, Z13, and 4E10. MPER seems to play a role in fusion.</text>
</comment>
<comment type="domain">
    <text evidence="1">The 17 amino acids long immunosuppressive region is present in many retroviral envelope proteins. Synthetic peptides derived from this relatively conserved sequence inhibit immune function in vitro and in vivo.</text>
</comment>
<comment type="domain">
    <text evidence="1">The YXXL motif is involved in determining the exact site of viral release at the surface of infected mononuclear cells and promotes endocytosis. YXXL and di-leucine endocytosis motifs interact directly or indirectly with the clathrin adapter complexes, opperate independently, and their activities are not additive.</text>
</comment>
<comment type="domain">
    <text evidence="1">The CD4-binding region is targeted by the antibody b12.</text>
</comment>
<comment type="PTM">
    <text evidence="1">Highly glycosylated by host. The high number of glycan on the protein is reffered to as 'glycan shield' because it contributes to hide protein sequence from adaptive immune system.</text>
</comment>
<comment type="PTM">
    <text evidence="1">Palmitoylation of the transmembrane protein and of Env polyprotein (prior to its proteolytic cleavage) is essential for their association with host cell membrane lipid rafts. Palmitoylation is therefore required for envelope trafficking to classical lipid rafts, but not for viral replication.</text>
</comment>
<comment type="PTM">
    <text evidence="1">Specific enzymatic cleavages in vivo yield mature proteins. Envelope glycoproteins are synthesized as an inactive precursor that is heavily N-glycosylated and processed likely by host cell furin in the Golgi to yield the mature SU and TM proteins. The cleavage site between SU and TM requires the minimal sequence [KR]-X-[KR]-R. About 2 of the 9 disulfide bonds of gp41 are reduced by P4HB/PDI, following binding to CD4 receptor.</text>
</comment>
<comment type="miscellaneous">
    <text evidence="1">Inhibitors targeting HIV-1 viral envelope proteins are used as antiretroviral drugs. Attachment of virions to the cell surface via non-specific interactions and CD4 binding can be blocked by inhibitors that include cyanovirin-N, cyclotriazadisulfonamide analogs, PRO 2000, TNX 355 and PRO 542. In addition, BMS 806 can block CD4-induced conformational changes. Env interactions with the coreceptor molecules can be targeted by CCR5 antagonists including SCH-D, maraviroc (UK 427857) and aplaviroc (GW 873140), and the CXCR4 antagonist AMD 070. Fusion of viral and cellular membranes can be inhibited by peptides such as enfuvirtide and tifuvirtide (T 1249). Resistance to inhibitors associated with mutations in Env are observed. Most of the time, single mutations confer only a modest reduction in drug susceptibility. Combination of several mutations is usually required to develop a high-level drug resistance.</text>
</comment>
<comment type="miscellaneous">
    <text evidence="1">HIV-1 lineages are divided in three main groups, M (for Major), O (for Outlier), and N (for New, or Non-M, Non-O). The vast majority of strains found worldwide belong to the group M. Group O seems to be endemic to and largely confined to Cameroon and neighboring countries in West Central Africa, where these viruses represent a small minority of HIV-1 strains. The group N is represented by a limited number of isolates from Cameroonian persons. The group M is further subdivided in 9 clades or subtypes (A to D, F to H, J and K).</text>
</comment>
<comment type="similarity">
    <text evidence="1">Belongs to the HIV-1 env protein family.</text>
</comment>
<comment type="online information" name="hivdb">
    <link uri="https://hivdb.stanford.edu"/>
    <text>HIV drug resistance database</text>
</comment>
<comment type="online information" name="HIV drug resistance mutations">
    <link uri="https://www.iasusa.org/hiv-drug-resistance/hiv-drug-resistance-mutations/"/>
</comment>
<protein>
    <recommendedName>
        <fullName evidence="1">Envelope glycoprotein gp160</fullName>
    </recommendedName>
    <alternativeName>
        <fullName evidence="1">Env polyprotein</fullName>
    </alternativeName>
    <component>
        <recommendedName>
            <fullName evidence="1">Surface protein gp120</fullName>
            <shortName evidence="1">SU</shortName>
        </recommendedName>
        <alternativeName>
            <fullName evidence="1">Glycoprotein 120</fullName>
            <shortName evidence="1">gp120</shortName>
        </alternativeName>
    </component>
    <component>
        <recommendedName>
            <fullName evidence="1">Transmembrane protein gp41</fullName>
            <shortName evidence="1">TM</shortName>
        </recommendedName>
        <alternativeName>
            <fullName evidence="1">Glycoprotein 41</fullName>
            <shortName evidence="1">gp41</shortName>
        </alternativeName>
    </component>
</protein>
<sequence>MRVEGIQRNWKQWWIWGILGFWMVMIYNVRGNLWVTVYYGVPVWKEAKTTLFCASDAKAYDAEVHNVWATHACVPTDPNPQEMVLENVTENFNMWENDMVEQMHQDIISLWDQSLKPCVKLTPLCVTLHCSNRTIDYNNRTDNMGGEIKNCSFNMTTEVRDKREKVHALFYRLDIVPLKNESSNTSGDYRLINCNTSAITQACPKVSFDPIPIHYCAPAGYAILKCNNKTFNGTGPCNNVSTIQCTHGTKPVVSTQLLLNGSLAEEEIIIRSKNLTDNVKTIIVHLNESVEINCTRPNNNTRKSIRIGPGQAFYATGEIIGDIRQAHCNISRTAWNKTLQEVGKKLAEHFPNKAIKFAKHSGGDLEITTHSFNCRGEFFYCNTSSLFNSTYTPNSTENITGTENSIITIPCRIKQIINMWQGVGRAMYAPPIEGILTCRSNITGLLLTRDGGTGMHDTEIFRPEGGDMRDNWRSELYKYKVVEIKPLGIAPTKAKRRVVEREKRAVGIGAVFLGFLGAAGSTMGAASITLTVQVRQLLSGIVQQQSNLLRAIEAQQHMLQLTVWGIKQLQTRVLAIERYLRDQQLLGIWGCSGKLICTTAVPWNSSWSNRSQEDIWNNMTWMQWDREISNYTNTIYRLLEDSQNQQEKNEQDLLALDKWQNLWTWFGITNWLWYIKIFIKIVGGLIGLRIIFAVLSIVNRVRQGYSPLSFQTLTPNPRGPDRLGGIEEEGGEQDRDRSIRLVSGFLALAWDDLRSLCLFSYHRLRDLILIAARAVELLGRSSLRGIQRGWEILKYLGGLVQYWSLELKKSAISLFDTIAIAVAEGTDRIIEVIQGIWRAICNIPRRIRQGFEAALQ</sequence>
<reference key="1">
    <citation type="journal article" date="1996" name="J. Virol.">
        <title>Molecular cloning and analysis of functional envelope genes from human immunodeficiency virus type 1 sequence subtypes A through G. The WHO and NIAID Networks for HIV Isolation and Characterization.</title>
        <authorList>
            <person name="Gao F."/>
            <person name="Morrison S.G."/>
            <person name="Robertson D.L."/>
            <person name="Thornton C.L."/>
            <person name="Craig S."/>
            <person name="Karlsson G."/>
            <person name="Sodroski J."/>
            <person name="Morgado M."/>
            <person name="Galvao-Castro B."/>
            <person name="von Briesen H."/>
            <person name="Beddows S."/>
            <person name="Weber J."/>
            <person name="Sharp P.M."/>
            <person name="Shaw G.M."/>
            <person name="Hahn B.H."/>
        </authorList>
    </citation>
    <scope>NUCLEOTIDE SEQUENCE [GENOMIC DNA]</scope>
</reference>
<reference key="2">
    <citation type="journal article" date="2003" name="APMIS">
        <title>Pathogens target DC-SIGN to influence their fate DC-SIGN functions as a pathogen receptor with broad specificity.</title>
        <authorList>
            <person name="Geijtenbeek T.B."/>
            <person name="van Kooyk Y."/>
        </authorList>
    </citation>
    <scope>REVIEW</scope>
</reference>
<reference key="3">
    <citation type="journal article" date="2003" name="Biochim. Biophys. Acta">
        <title>The HIV Env-mediated fusion reaction.</title>
        <authorList>
            <person name="Gallo S.A."/>
            <person name="Finnegan C.M."/>
            <person name="Viard M."/>
            <person name="Raviv Y."/>
            <person name="Dimitrov A."/>
            <person name="Rawat S.S."/>
            <person name="Puri A."/>
            <person name="Durell S."/>
            <person name="Blumenthal R."/>
        </authorList>
    </citation>
    <scope>REVIEW</scope>
</reference>
<reference key="4">
    <citation type="journal article" date="2005" name="Cell Death Differ.">
        <title>Mechanisms of apoptosis induction by the HIV-1 envelope.</title>
        <authorList>
            <person name="Perfettini J.-L."/>
            <person name="Castedo M."/>
            <person name="Roumier T."/>
            <person name="Andreau K."/>
            <person name="Nardacci R."/>
            <person name="Piacentini M."/>
            <person name="Kroemer G."/>
        </authorList>
    </citation>
    <scope>REVIEW</scope>
</reference>
<reference key="5">
    <citation type="journal article" date="2005" name="AIDS Res. Hum. Retroviruses">
        <title>V3: HIV's switch-hitter.</title>
        <authorList>
            <person name="Hartley O."/>
            <person name="Klasse P.J."/>
            <person name="Sattentau Q.J."/>
            <person name="Moore J.P."/>
        </authorList>
    </citation>
    <scope>REVIEW</scope>
</reference>
<reference key="6">
    <citation type="journal article" date="2005" name="Drugs">
        <title>Emerging drug targets for antiretroviral therapy.</title>
        <authorList>
            <person name="Reeves J.D."/>
            <person name="Piefer A.J."/>
        </authorList>
    </citation>
    <scope>REVIEW</scope>
</reference>
<reference key="7">
    <citation type="journal article" date="2006" name="EMBO J.">
        <title>HIV and the chemokine system: 10 years later.</title>
        <authorList>
            <person name="Lusso P."/>
        </authorList>
    </citation>
    <scope>REVIEW</scope>
</reference>
<accession>O12164</accession>
<organismHost>
    <name type="scientific">Homo sapiens</name>
    <name type="common">Human</name>
    <dbReference type="NCBI Taxonomy" id="9606"/>
</organismHost>
<gene>
    <name evidence="1" type="primary">env</name>
</gene>
<keyword id="KW-0014">AIDS</keyword>
<keyword id="KW-0053">Apoptosis</keyword>
<keyword id="KW-1165">Clathrin-mediated endocytosis of virus by host</keyword>
<keyword id="KW-0165">Cleavage on pair of basic residues</keyword>
<keyword id="KW-0175">Coiled coil</keyword>
<keyword id="KW-1015">Disulfide bond</keyword>
<keyword id="KW-1170">Fusion of virus membrane with host endosomal membrane</keyword>
<keyword id="KW-1168">Fusion of virus membrane with host membrane</keyword>
<keyword id="KW-0325">Glycoprotein</keyword>
<keyword id="KW-1032">Host cell membrane</keyword>
<keyword id="KW-1039">Host endosome</keyword>
<keyword id="KW-1043">Host membrane</keyword>
<keyword id="KW-0945">Host-virus interaction</keyword>
<keyword id="KW-0449">Lipoprotein</keyword>
<keyword id="KW-0472">Membrane</keyword>
<keyword id="KW-0564">Palmitate</keyword>
<keyword id="KW-1185">Reference proteome</keyword>
<keyword id="KW-0732">Signal</keyword>
<keyword id="KW-0812">Transmembrane</keyword>
<keyword id="KW-1133">Transmembrane helix</keyword>
<keyword id="KW-1161">Viral attachment to host cell</keyword>
<keyword id="KW-0261">Viral envelope protein</keyword>
<keyword id="KW-0899">Viral immunoevasion</keyword>
<keyword id="KW-1162">Viral penetration into host cytoplasm</keyword>
<keyword id="KW-0946">Virion</keyword>
<keyword id="KW-1164">Virus endocytosis by host</keyword>
<keyword id="KW-1160">Virus entry into host cell</keyword>
<organism>
    <name type="scientific">Human immunodeficiency virus type 1 group M subtype C (isolate 92BR025)</name>
    <name type="common">HIV-1</name>
    <dbReference type="NCBI Taxonomy" id="388812"/>
    <lineage>
        <taxon>Viruses</taxon>
        <taxon>Riboviria</taxon>
        <taxon>Pararnavirae</taxon>
        <taxon>Artverviricota</taxon>
        <taxon>Revtraviricetes</taxon>
        <taxon>Ortervirales</taxon>
        <taxon>Retroviridae</taxon>
        <taxon>Orthoretrovirinae</taxon>
        <taxon>Lentivirus</taxon>
        <taxon>Human immunodeficiency virus type 1</taxon>
    </lineage>
</organism>
<name>ENV_HV192</name>
<dbReference type="EMBL" id="U52953">
    <property type="protein sequence ID" value="AAB61124.1"/>
    <property type="molecule type" value="Genomic_DNA"/>
</dbReference>
<dbReference type="SMR" id="O12164"/>
<dbReference type="GlyCosmos" id="O12164">
    <property type="glycosylation" value="27 sites, No reported glycans"/>
</dbReference>
<dbReference type="Proteomes" id="UP000007686">
    <property type="component" value="Segment"/>
</dbReference>
<dbReference type="GO" id="GO:0044175">
    <property type="term" value="C:host cell endosome membrane"/>
    <property type="evidence" value="ECO:0007669"/>
    <property type="project" value="UniProtKB-SubCell"/>
</dbReference>
<dbReference type="GO" id="GO:0020002">
    <property type="term" value="C:host cell plasma membrane"/>
    <property type="evidence" value="ECO:0007669"/>
    <property type="project" value="UniProtKB-SubCell"/>
</dbReference>
<dbReference type="GO" id="GO:0016020">
    <property type="term" value="C:membrane"/>
    <property type="evidence" value="ECO:0007669"/>
    <property type="project" value="UniProtKB-UniRule"/>
</dbReference>
<dbReference type="GO" id="GO:0019031">
    <property type="term" value="C:viral envelope"/>
    <property type="evidence" value="ECO:0007669"/>
    <property type="project" value="UniProtKB-KW"/>
</dbReference>
<dbReference type="GO" id="GO:0055036">
    <property type="term" value="C:virion membrane"/>
    <property type="evidence" value="ECO:0007669"/>
    <property type="project" value="UniProtKB-SubCell"/>
</dbReference>
<dbReference type="GO" id="GO:0005198">
    <property type="term" value="F:structural molecule activity"/>
    <property type="evidence" value="ECO:0007669"/>
    <property type="project" value="UniProtKB-UniRule"/>
</dbReference>
<dbReference type="GO" id="GO:0141025">
    <property type="term" value="P:adhesion of symbiont to host cell surface via host glycoprotein"/>
    <property type="evidence" value="ECO:0000269"/>
    <property type="project" value="SigSci"/>
</dbReference>
<dbReference type="GO" id="GO:0075512">
    <property type="term" value="P:clathrin-dependent endocytosis of virus by host cell"/>
    <property type="evidence" value="ECO:0007669"/>
    <property type="project" value="UniProtKB-UniRule"/>
</dbReference>
<dbReference type="GO" id="GO:0039654">
    <property type="term" value="P:fusion of virus membrane with host endosome membrane"/>
    <property type="evidence" value="ECO:0007669"/>
    <property type="project" value="UniProtKB-UniRule"/>
</dbReference>
<dbReference type="GO" id="GO:0019064">
    <property type="term" value="P:fusion of virus membrane with host plasma membrane"/>
    <property type="evidence" value="ECO:0007669"/>
    <property type="project" value="UniProtKB-UniRule"/>
</dbReference>
<dbReference type="GO" id="GO:1903908">
    <property type="term" value="P:positive regulation of plasma membrane raft polarization"/>
    <property type="evidence" value="ECO:0007669"/>
    <property type="project" value="UniProtKB-UniRule"/>
</dbReference>
<dbReference type="GO" id="GO:1903911">
    <property type="term" value="P:positive regulation of receptor clustering"/>
    <property type="evidence" value="ECO:0007669"/>
    <property type="project" value="UniProtKB-UniRule"/>
</dbReference>
<dbReference type="GO" id="GO:0019082">
    <property type="term" value="P:viral protein processing"/>
    <property type="evidence" value="ECO:0007669"/>
    <property type="project" value="UniProtKB-UniRule"/>
</dbReference>
<dbReference type="GO" id="GO:0019062">
    <property type="term" value="P:virion attachment to host cell"/>
    <property type="evidence" value="ECO:0007669"/>
    <property type="project" value="UniProtKB-UniRule"/>
</dbReference>
<dbReference type="CDD" id="cd09909">
    <property type="entry name" value="HIV-1-like_HR1-HR2"/>
    <property type="match status" value="1"/>
</dbReference>
<dbReference type="FunFam" id="1.10.287.210:FF:000001">
    <property type="entry name" value="Envelope glycoprotein gp160"/>
    <property type="match status" value="1"/>
</dbReference>
<dbReference type="FunFam" id="2.170.40.20:FF:000003">
    <property type="entry name" value="Envelope glycoprotein gp160"/>
    <property type="match status" value="1"/>
</dbReference>
<dbReference type="FunFam" id="2.170.40.20:FF:000004">
    <property type="entry name" value="Envelope glycoprotein gp160"/>
    <property type="match status" value="1"/>
</dbReference>
<dbReference type="Gene3D" id="1.10.287.210">
    <property type="match status" value="1"/>
</dbReference>
<dbReference type="Gene3D" id="2.170.40.20">
    <property type="entry name" value="Human immunodeficiency virus 1, Gp160, envelope glycoprotein"/>
    <property type="match status" value="2"/>
</dbReference>
<dbReference type="Gene3D" id="1.20.5.490">
    <property type="entry name" value="Single helix bin"/>
    <property type="match status" value="1"/>
</dbReference>
<dbReference type="HAMAP" id="MF_04083">
    <property type="entry name" value="HIV_ENV"/>
    <property type="match status" value="1"/>
</dbReference>
<dbReference type="InterPro" id="IPR036377">
    <property type="entry name" value="Gp120_core_sf"/>
</dbReference>
<dbReference type="InterPro" id="IPR037527">
    <property type="entry name" value="Gp160"/>
</dbReference>
<dbReference type="InterPro" id="IPR000328">
    <property type="entry name" value="GP41-like"/>
</dbReference>
<dbReference type="InterPro" id="IPR000777">
    <property type="entry name" value="HIV1_Gp120"/>
</dbReference>
<dbReference type="Pfam" id="PF00516">
    <property type="entry name" value="GP120"/>
    <property type="match status" value="2"/>
</dbReference>
<dbReference type="Pfam" id="PF00517">
    <property type="entry name" value="GP41"/>
    <property type="match status" value="1"/>
</dbReference>
<dbReference type="SUPFAM" id="SSF56502">
    <property type="entry name" value="gp120 core"/>
    <property type="match status" value="2"/>
</dbReference>
<dbReference type="SUPFAM" id="SSF58069">
    <property type="entry name" value="Virus ectodomain"/>
    <property type="match status" value="1"/>
</dbReference>
<feature type="signal peptide" evidence="1">
    <location>
        <begin position="1"/>
        <end position="31"/>
    </location>
</feature>
<feature type="chain" id="PRO_0000244654" description="Envelope glycoprotein gp160" evidence="1">
    <location>
        <begin position="32"/>
        <end position="856"/>
    </location>
</feature>
<feature type="chain" id="PRO_0000244655" description="Surface protein gp120" evidence="1">
    <location>
        <begin position="32"/>
        <end position="504"/>
    </location>
</feature>
<feature type="chain" id="PRO_0000244656" description="Transmembrane protein gp41" evidence="1">
    <location>
        <begin position="505"/>
        <end position="856"/>
    </location>
</feature>
<feature type="topological domain" description="Extracellular" evidence="1">
    <location>
        <begin position="32"/>
        <end position="677"/>
    </location>
</feature>
<feature type="transmembrane region" description="Helical" evidence="1">
    <location>
        <begin position="678"/>
        <end position="698"/>
    </location>
</feature>
<feature type="topological domain" description="Cytoplasmic" evidence="1">
    <location>
        <begin position="699"/>
        <end position="856"/>
    </location>
</feature>
<feature type="region of interest" description="V1" evidence="1">
    <location>
        <begin position="130"/>
        <end position="150"/>
    </location>
</feature>
<feature type="region of interest" description="V2" evidence="1">
    <location>
        <begin position="151"/>
        <end position="194"/>
    </location>
</feature>
<feature type="region of interest" description="V3" evidence="1">
    <location>
        <begin position="294"/>
        <end position="327"/>
    </location>
</feature>
<feature type="region of interest" description="CD4-binding loop" evidence="1">
    <location>
        <begin position="360"/>
        <end position="370"/>
    </location>
</feature>
<feature type="region of interest" description="V4" evidence="1">
    <location>
        <begin position="381"/>
        <end position="411"/>
    </location>
</feature>
<feature type="region of interest" description="V5">
    <location>
        <begin position="454"/>
        <end position="464"/>
    </location>
</feature>
<feature type="region of interest" description="V5" evidence="1">
    <location>
        <begin position="456"/>
        <end position="464"/>
    </location>
</feature>
<feature type="region of interest" description="Fusion peptide" evidence="1">
    <location>
        <begin position="505"/>
        <end position="525"/>
    </location>
</feature>
<feature type="region of interest" description="Immunosuppression" evidence="1">
    <location>
        <begin position="567"/>
        <end position="585"/>
    </location>
</feature>
<feature type="region of interest" description="MPER; binding to GalCer" evidence="1">
    <location>
        <begin position="655"/>
        <end position="676"/>
    </location>
</feature>
<feature type="region of interest" description="Disordered" evidence="2">
    <location>
        <begin position="712"/>
        <end position="732"/>
    </location>
</feature>
<feature type="coiled-coil region" evidence="1">
    <location>
        <begin position="626"/>
        <end position="660"/>
    </location>
</feature>
<feature type="short sequence motif" description="YXXL motif; contains endocytosis signal" evidence="1">
    <location>
        <begin position="705"/>
        <end position="708"/>
    </location>
</feature>
<feature type="site" description="Cleavage; by host furin" evidence="1">
    <location>
        <begin position="504"/>
        <end position="505"/>
    </location>
</feature>
<feature type="lipid moiety-binding region" description="S-palmitoyl cysteine; by host" evidence="1">
    <location>
        <position position="757"/>
    </location>
</feature>
<feature type="glycosylation site" description="N-linked (GlcNAc...) asparagine; by host" evidence="1">
    <location>
        <position position="87"/>
    </location>
</feature>
<feature type="glycosylation site" description="N-linked (GlcNAc...) asparagine; by host" evidence="1">
    <location>
        <position position="132"/>
    </location>
</feature>
<feature type="glycosylation site" description="N-linked (GlcNAc...) asparagine; by host" evidence="1">
    <location>
        <position position="139"/>
    </location>
</feature>
<feature type="glycosylation site" description="N-linked (GlcNAc...) asparagine; by host" evidence="1">
    <location>
        <position position="150"/>
    </location>
</feature>
<feature type="glycosylation site" description="N-linked (GlcNAc...) asparagine; by host" evidence="1">
    <location>
        <position position="154"/>
    </location>
</feature>
<feature type="glycosylation site" description="N-linked (GlcNAc...) asparagine; by host" evidence="1">
    <location>
        <position position="180"/>
    </location>
</feature>
<feature type="glycosylation site" description="N-linked (GlcNAc...) asparagine; by host" evidence="1">
    <location>
        <position position="184"/>
    </location>
</feature>
<feature type="glycosylation site" description="N-linked (GlcNAc...) asparagine; by host" evidence="1">
    <location>
        <position position="195"/>
    </location>
</feature>
<feature type="glycosylation site" description="N-linked (GlcNAc...) asparagine; by host" evidence="1">
    <location>
        <position position="228"/>
    </location>
</feature>
<feature type="glycosylation site" description="N-linked (GlcNAc...) asparagine; by host" evidence="1">
    <location>
        <position position="232"/>
    </location>
</feature>
<feature type="glycosylation site" description="N-linked (GlcNAc...) asparagine; by host" evidence="1">
    <location>
        <position position="239"/>
    </location>
</feature>
<feature type="glycosylation site" description="N-linked (GlcNAc...) asparagine; by host" evidence="1">
    <location>
        <position position="260"/>
    </location>
</feature>
<feature type="glycosylation site" description="N-linked (GlcNAc...) asparagine; by host" evidence="1">
    <location>
        <position position="274"/>
    </location>
</feature>
<feature type="glycosylation site" description="N-linked (GlcNAc...) asparagine; by host" evidence="1">
    <location>
        <position position="287"/>
    </location>
</feature>
<feature type="glycosylation site" description="N-linked (GlcNAc...) asparagine; by host" evidence="1">
    <location>
        <position position="293"/>
    </location>
</feature>
<feature type="glycosylation site" description="N-linked (GlcNAc...) asparagine; by host" evidence="1">
    <location>
        <position position="299"/>
    </location>
</feature>
<feature type="glycosylation site" description="N-linked (GlcNAc...) asparagine; by host" evidence="1">
    <location>
        <position position="329"/>
    </location>
</feature>
<feature type="glycosylation site" description="N-linked (GlcNAc...) asparagine; by host" evidence="1">
    <location>
        <position position="336"/>
    </location>
</feature>
<feature type="glycosylation site" description="N-linked (GlcNAc...) asparagine; by host" evidence="1">
    <location>
        <position position="382"/>
    </location>
</feature>
<feature type="glycosylation site" description="N-linked (GlcNAc...) asparagine; by host" evidence="1">
    <location>
        <position position="388"/>
    </location>
</feature>
<feature type="glycosylation site" description="N-linked (GlcNAc...) asparagine; by host" evidence="1">
    <location>
        <position position="394"/>
    </location>
</feature>
<feature type="glycosylation site" description="N-linked (GlcNAc...) asparagine; by host" evidence="1">
    <location>
        <position position="398"/>
    </location>
</feature>
<feature type="glycosylation site" description="N-linked (GlcNAc...) asparagine; by host" evidence="1">
    <location>
        <position position="441"/>
    </location>
</feature>
<feature type="glycosylation site" description="N-linked (GlcNAc...) asparagine; by host" evidence="1">
    <location>
        <position position="604"/>
    </location>
</feature>
<feature type="glycosylation site" description="N-linked (GlcNAc...) asparagine; by host" evidence="1">
    <location>
        <position position="609"/>
    </location>
</feature>
<feature type="glycosylation site" description="N-linked (GlcNAc...) asparagine; by host" evidence="1">
    <location>
        <position position="618"/>
    </location>
</feature>
<feature type="glycosylation site" description="N-linked (GlcNAc...) asparagine; by host" evidence="1">
    <location>
        <position position="630"/>
    </location>
</feature>
<feature type="disulfide bond" evidence="1">
    <location>
        <begin position="53"/>
        <end position="73"/>
    </location>
</feature>
<feature type="disulfide bond" evidence="1">
    <location>
        <begin position="118"/>
        <end position="203"/>
    </location>
</feature>
<feature type="disulfide bond" evidence="1">
    <location>
        <begin position="125"/>
        <end position="194"/>
    </location>
</feature>
<feature type="disulfide bond" evidence="1">
    <location>
        <begin position="130"/>
        <end position="151"/>
    </location>
</feature>
<feature type="disulfide bond" evidence="1">
    <location>
        <begin position="216"/>
        <end position="245"/>
    </location>
</feature>
<feature type="disulfide bond" evidence="1">
    <location>
        <begin position="226"/>
        <end position="237"/>
    </location>
</feature>
<feature type="disulfide bond" evidence="1">
    <location>
        <begin position="294"/>
        <end position="328"/>
    </location>
</feature>
<feature type="disulfide bond" evidence="1">
    <location>
        <begin position="374"/>
        <end position="438"/>
    </location>
</feature>
<feature type="disulfide bond" evidence="1">
    <location>
        <begin position="381"/>
        <end position="411"/>
    </location>
</feature>
<feature type="disulfide bond" evidence="1">
    <location>
        <begin position="591"/>
        <end position="597"/>
    </location>
</feature>
<evidence type="ECO:0000255" key="1">
    <source>
        <dbReference type="HAMAP-Rule" id="MF_04083"/>
    </source>
</evidence>
<evidence type="ECO:0000256" key="2">
    <source>
        <dbReference type="SAM" id="MobiDB-lite"/>
    </source>
</evidence>